<organism>
    <name type="scientific">Pelotomaculum thermopropionicum (strain DSM 13744 / JCM 10971 / SI)</name>
    <dbReference type="NCBI Taxonomy" id="370438"/>
    <lineage>
        <taxon>Bacteria</taxon>
        <taxon>Bacillati</taxon>
        <taxon>Bacillota</taxon>
        <taxon>Clostridia</taxon>
        <taxon>Eubacteriales</taxon>
        <taxon>Desulfotomaculaceae</taxon>
        <taxon>Pelotomaculum</taxon>
    </lineage>
</organism>
<proteinExistence type="inferred from homology"/>
<name>HEM1_PELTS</name>
<gene>
    <name evidence="1" type="primary">hemA</name>
    <name type="ordered locus">PTH_0971</name>
</gene>
<dbReference type="EC" id="1.2.1.70" evidence="1"/>
<dbReference type="EMBL" id="AP009389">
    <property type="protein sequence ID" value="BAF59152.1"/>
    <property type="molecule type" value="Genomic_DNA"/>
</dbReference>
<dbReference type="SMR" id="A5D3L4"/>
<dbReference type="STRING" id="370438.PTH_0971"/>
<dbReference type="KEGG" id="pth:PTH_0971"/>
<dbReference type="eggNOG" id="COG0373">
    <property type="taxonomic scope" value="Bacteria"/>
</dbReference>
<dbReference type="HOGENOM" id="CLU_035113_2_2_9"/>
<dbReference type="UniPathway" id="UPA00251">
    <property type="reaction ID" value="UER00316"/>
</dbReference>
<dbReference type="Proteomes" id="UP000006556">
    <property type="component" value="Chromosome"/>
</dbReference>
<dbReference type="GO" id="GO:0008883">
    <property type="term" value="F:glutamyl-tRNA reductase activity"/>
    <property type="evidence" value="ECO:0007669"/>
    <property type="project" value="UniProtKB-UniRule"/>
</dbReference>
<dbReference type="GO" id="GO:0050661">
    <property type="term" value="F:NADP binding"/>
    <property type="evidence" value="ECO:0007669"/>
    <property type="project" value="InterPro"/>
</dbReference>
<dbReference type="GO" id="GO:0019353">
    <property type="term" value="P:protoporphyrinogen IX biosynthetic process from glutamate"/>
    <property type="evidence" value="ECO:0007669"/>
    <property type="project" value="TreeGrafter"/>
</dbReference>
<dbReference type="CDD" id="cd05213">
    <property type="entry name" value="NAD_bind_Glutamyl_tRNA_reduct"/>
    <property type="match status" value="1"/>
</dbReference>
<dbReference type="FunFam" id="3.30.460.30:FF:000001">
    <property type="entry name" value="Glutamyl-tRNA reductase"/>
    <property type="match status" value="1"/>
</dbReference>
<dbReference type="FunFam" id="3.40.50.720:FF:000031">
    <property type="entry name" value="Glutamyl-tRNA reductase"/>
    <property type="match status" value="1"/>
</dbReference>
<dbReference type="Gene3D" id="3.30.460.30">
    <property type="entry name" value="Glutamyl-tRNA reductase, N-terminal domain"/>
    <property type="match status" value="1"/>
</dbReference>
<dbReference type="Gene3D" id="3.40.50.720">
    <property type="entry name" value="NAD(P)-binding Rossmann-like Domain"/>
    <property type="match status" value="1"/>
</dbReference>
<dbReference type="HAMAP" id="MF_00087">
    <property type="entry name" value="Glu_tRNA_reductase"/>
    <property type="match status" value="1"/>
</dbReference>
<dbReference type="InterPro" id="IPR000343">
    <property type="entry name" value="4pyrrol_synth_GluRdtase"/>
</dbReference>
<dbReference type="InterPro" id="IPR015896">
    <property type="entry name" value="4pyrrol_synth_GluRdtase_dimer"/>
</dbReference>
<dbReference type="InterPro" id="IPR015895">
    <property type="entry name" value="4pyrrol_synth_GluRdtase_N"/>
</dbReference>
<dbReference type="InterPro" id="IPR018214">
    <property type="entry name" value="GluRdtase_CS"/>
</dbReference>
<dbReference type="InterPro" id="IPR036453">
    <property type="entry name" value="GluRdtase_dimer_dom_sf"/>
</dbReference>
<dbReference type="InterPro" id="IPR036343">
    <property type="entry name" value="GluRdtase_N_sf"/>
</dbReference>
<dbReference type="InterPro" id="IPR036291">
    <property type="entry name" value="NAD(P)-bd_dom_sf"/>
</dbReference>
<dbReference type="InterPro" id="IPR006151">
    <property type="entry name" value="Shikm_DH/Glu-tRNA_Rdtase"/>
</dbReference>
<dbReference type="NCBIfam" id="TIGR01035">
    <property type="entry name" value="hemA"/>
    <property type="match status" value="1"/>
</dbReference>
<dbReference type="NCBIfam" id="NF000744">
    <property type="entry name" value="PRK00045.1-3"/>
    <property type="match status" value="1"/>
</dbReference>
<dbReference type="PANTHER" id="PTHR43013">
    <property type="entry name" value="GLUTAMYL-TRNA REDUCTASE"/>
    <property type="match status" value="1"/>
</dbReference>
<dbReference type="PANTHER" id="PTHR43013:SF1">
    <property type="entry name" value="GLUTAMYL-TRNA REDUCTASE"/>
    <property type="match status" value="1"/>
</dbReference>
<dbReference type="Pfam" id="PF00745">
    <property type="entry name" value="GlutR_dimer"/>
    <property type="match status" value="1"/>
</dbReference>
<dbReference type="Pfam" id="PF05201">
    <property type="entry name" value="GlutR_N"/>
    <property type="match status" value="1"/>
</dbReference>
<dbReference type="Pfam" id="PF01488">
    <property type="entry name" value="Shikimate_DH"/>
    <property type="match status" value="1"/>
</dbReference>
<dbReference type="PIRSF" id="PIRSF000445">
    <property type="entry name" value="4pyrrol_synth_GluRdtase"/>
    <property type="match status" value="1"/>
</dbReference>
<dbReference type="SUPFAM" id="SSF69742">
    <property type="entry name" value="Glutamyl tRNA-reductase catalytic, N-terminal domain"/>
    <property type="match status" value="1"/>
</dbReference>
<dbReference type="SUPFAM" id="SSF69075">
    <property type="entry name" value="Glutamyl tRNA-reductase dimerization domain"/>
    <property type="match status" value="1"/>
</dbReference>
<dbReference type="SUPFAM" id="SSF51735">
    <property type="entry name" value="NAD(P)-binding Rossmann-fold domains"/>
    <property type="match status" value="1"/>
</dbReference>
<dbReference type="PROSITE" id="PS00747">
    <property type="entry name" value="GLUTR"/>
    <property type="match status" value="1"/>
</dbReference>
<accession>A5D3L4</accession>
<reference key="1">
    <citation type="journal article" date="2008" name="Genome Res.">
        <title>The genome of Pelotomaculum thermopropionicum reveals niche-associated evolution in anaerobic microbiota.</title>
        <authorList>
            <person name="Kosaka T."/>
            <person name="Kato S."/>
            <person name="Shimoyama T."/>
            <person name="Ishii S."/>
            <person name="Abe T."/>
            <person name="Watanabe K."/>
        </authorList>
    </citation>
    <scope>NUCLEOTIDE SEQUENCE [LARGE SCALE GENOMIC DNA]</scope>
    <source>
        <strain>DSM 13744 / JCM 10971 / SI</strain>
    </source>
</reference>
<feature type="chain" id="PRO_1000075416" description="Glutamyl-tRNA reductase">
    <location>
        <begin position="1"/>
        <end position="444"/>
    </location>
</feature>
<feature type="region of interest" description="Disordered" evidence="2">
    <location>
        <begin position="425"/>
        <end position="444"/>
    </location>
</feature>
<feature type="active site" description="Nucleophile" evidence="1">
    <location>
        <position position="50"/>
    </location>
</feature>
<feature type="binding site" evidence="1">
    <location>
        <begin position="49"/>
        <end position="52"/>
    </location>
    <ligand>
        <name>substrate</name>
    </ligand>
</feature>
<feature type="binding site" evidence="1">
    <location>
        <position position="109"/>
    </location>
    <ligand>
        <name>substrate</name>
    </ligand>
</feature>
<feature type="binding site" evidence="1">
    <location>
        <begin position="114"/>
        <end position="116"/>
    </location>
    <ligand>
        <name>substrate</name>
    </ligand>
</feature>
<feature type="binding site" evidence="1">
    <location>
        <position position="120"/>
    </location>
    <ligand>
        <name>substrate</name>
    </ligand>
</feature>
<feature type="binding site" evidence="1">
    <location>
        <begin position="189"/>
        <end position="194"/>
    </location>
    <ligand>
        <name>NADP(+)</name>
        <dbReference type="ChEBI" id="CHEBI:58349"/>
    </ligand>
</feature>
<feature type="site" description="Important for activity" evidence="1">
    <location>
        <position position="99"/>
    </location>
</feature>
<evidence type="ECO:0000255" key="1">
    <source>
        <dbReference type="HAMAP-Rule" id="MF_00087"/>
    </source>
</evidence>
<evidence type="ECO:0000256" key="2">
    <source>
        <dbReference type="SAM" id="MobiDB-lite"/>
    </source>
</evidence>
<keyword id="KW-0521">NADP</keyword>
<keyword id="KW-0560">Oxidoreductase</keyword>
<keyword id="KW-0627">Porphyrin biosynthesis</keyword>
<keyword id="KW-1185">Reference proteome</keyword>
<sequence>MLILVVGLNHRTAPVEVREKLSFSAKSLQGALAQLKSYPVIEGCAILSTCNRTEIYAATLEMDDGLNAIWDFLSRWSGVGISEIKNFTYSHTLYDTIRHLFRVAAGLDSMILGETQILGQVREAYQRAIEYESTNRVLNTLFQQAITVGKRVRTETGIDRNAVSISYAAVELARQHLGSLDGRSVLVIGAGKMSELTARHLVANGVSSVIVSNRSFERAVALAEQFRGRAVRFDELYRCMEAADIVISCTAASHCVVKAEEVSRVMDKRRGRAIFMVDIAVPRDIEAEVGNLAGVTLFDIDDLKNVIDQNLAERKQAAVKAEEIIEEELDGFMKWLGMQFVVPTISALKKWGDEIKQKELCRALNRLGNISEHDRKVICSMANSIVNQILHVPVAQLKSYALTTEGHLYTEILQNLFNLDVPGQKPKKQPAPAGIKEPVLAKKG</sequence>
<protein>
    <recommendedName>
        <fullName evidence="1">Glutamyl-tRNA reductase</fullName>
        <shortName evidence="1">GluTR</shortName>
        <ecNumber evidence="1">1.2.1.70</ecNumber>
    </recommendedName>
</protein>
<comment type="function">
    <text evidence="1">Catalyzes the NADPH-dependent reduction of glutamyl-tRNA(Glu) to glutamate 1-semialdehyde (GSA).</text>
</comment>
<comment type="catalytic activity">
    <reaction evidence="1">
        <text>(S)-4-amino-5-oxopentanoate + tRNA(Glu) + NADP(+) = L-glutamyl-tRNA(Glu) + NADPH + H(+)</text>
        <dbReference type="Rhea" id="RHEA:12344"/>
        <dbReference type="Rhea" id="RHEA-COMP:9663"/>
        <dbReference type="Rhea" id="RHEA-COMP:9680"/>
        <dbReference type="ChEBI" id="CHEBI:15378"/>
        <dbReference type="ChEBI" id="CHEBI:57501"/>
        <dbReference type="ChEBI" id="CHEBI:57783"/>
        <dbReference type="ChEBI" id="CHEBI:58349"/>
        <dbReference type="ChEBI" id="CHEBI:78442"/>
        <dbReference type="ChEBI" id="CHEBI:78520"/>
        <dbReference type="EC" id="1.2.1.70"/>
    </reaction>
</comment>
<comment type="pathway">
    <text evidence="1">Porphyrin-containing compound metabolism; protoporphyrin-IX biosynthesis; 5-aminolevulinate from L-glutamyl-tRNA(Glu): step 1/2.</text>
</comment>
<comment type="subunit">
    <text evidence="1">Homodimer.</text>
</comment>
<comment type="domain">
    <text evidence="1">Possesses an unusual extended V-shaped dimeric structure with each monomer consisting of three distinct domains arranged along a curved 'spinal' alpha-helix. The N-terminal catalytic domain specifically recognizes the glutamate moiety of the substrate. The second domain is the NADPH-binding domain, and the third C-terminal domain is responsible for dimerization.</text>
</comment>
<comment type="miscellaneous">
    <text evidence="1">During catalysis, the active site Cys acts as a nucleophile attacking the alpha-carbonyl group of tRNA-bound glutamate with the formation of a thioester intermediate between enzyme and glutamate, and the concomitant release of tRNA(Glu). The thioester intermediate is finally reduced by direct hydride transfer from NADPH, to form the product GSA.</text>
</comment>
<comment type="similarity">
    <text evidence="1">Belongs to the glutamyl-tRNA reductase family.</text>
</comment>